<protein>
    <recommendedName>
        <fullName>Aminoacyltransferase FemA</fullName>
        <ecNumber>2.3.2.17</ecNumber>
    </recommendedName>
    <alternativeName>
        <fullName>Factor essential for expression of methicillin resistance A</fullName>
    </alternativeName>
    <alternativeName>
        <fullName>N-acetylmuramoyl-L-alanyl-D-glutamyl-L-lysyl-(N6-glycyl)-D-alanyl-D-alanine-diphosphoundecaprenyl-N-acetylglucosamine:glycine glycyltransferase</fullName>
    </alternativeName>
</protein>
<keyword id="KW-0012">Acyltransferase</keyword>
<keyword id="KW-0046">Antibiotic resistance</keyword>
<keyword id="KW-0133">Cell shape</keyword>
<keyword id="KW-0961">Cell wall biogenesis/degradation</keyword>
<keyword id="KW-0963">Cytoplasm</keyword>
<keyword id="KW-0573">Peptidoglycan synthesis</keyword>
<keyword id="KW-0808">Transferase</keyword>
<proteinExistence type="evidence at protein level"/>
<name>FEMA_STAAN</name>
<accession>Q7A5R3</accession>
<evidence type="ECO:0000250" key="1"/>
<evidence type="ECO:0000305" key="2"/>
<feature type="chain" id="PRO_0000232601" description="Aminoacyltransferase FemA">
    <location>
        <begin position="1"/>
        <end position="420"/>
    </location>
</feature>
<reference key="1">
    <citation type="journal article" date="2001" name="Lancet">
        <title>Whole genome sequencing of meticillin-resistant Staphylococcus aureus.</title>
        <authorList>
            <person name="Kuroda M."/>
            <person name="Ohta T."/>
            <person name="Uchiyama I."/>
            <person name="Baba T."/>
            <person name="Yuzawa H."/>
            <person name="Kobayashi I."/>
            <person name="Cui L."/>
            <person name="Oguchi A."/>
            <person name="Aoki K."/>
            <person name="Nagai Y."/>
            <person name="Lian J.-Q."/>
            <person name="Ito T."/>
            <person name="Kanamori M."/>
            <person name="Matsumaru H."/>
            <person name="Maruyama A."/>
            <person name="Murakami H."/>
            <person name="Hosoyama A."/>
            <person name="Mizutani-Ui Y."/>
            <person name="Takahashi N.K."/>
            <person name="Sawano T."/>
            <person name="Inoue R."/>
            <person name="Kaito C."/>
            <person name="Sekimizu K."/>
            <person name="Hirakawa H."/>
            <person name="Kuhara S."/>
            <person name="Goto S."/>
            <person name="Yabuzaki J."/>
            <person name="Kanehisa M."/>
            <person name="Yamashita A."/>
            <person name="Oshima K."/>
            <person name="Furuya K."/>
            <person name="Yoshino C."/>
            <person name="Shiba T."/>
            <person name="Hattori M."/>
            <person name="Ogasawara N."/>
            <person name="Hayashi H."/>
            <person name="Hiramatsu K."/>
        </authorList>
    </citation>
    <scope>NUCLEOTIDE SEQUENCE [LARGE SCALE GENOMIC DNA]</scope>
    <source>
        <strain>N315</strain>
    </source>
</reference>
<reference key="2">
    <citation type="submission" date="2007-10" db="UniProtKB">
        <title>Shotgun proteomic analysis of total and membrane protein extracts of S. aureus strain N315.</title>
        <authorList>
            <person name="Vaezzadeh A.R."/>
            <person name="Deshusses J."/>
            <person name="Lescuyer P."/>
            <person name="Hochstrasser D.F."/>
        </authorList>
    </citation>
    <scope>IDENTIFICATION BY MASS SPECTROMETRY [LARGE SCALE ANALYSIS]</scope>
    <source>
        <strain>N315</strain>
    </source>
</reference>
<organism>
    <name type="scientific">Staphylococcus aureus (strain N315)</name>
    <dbReference type="NCBI Taxonomy" id="158879"/>
    <lineage>
        <taxon>Bacteria</taxon>
        <taxon>Bacillati</taxon>
        <taxon>Bacillota</taxon>
        <taxon>Bacilli</taxon>
        <taxon>Bacillales</taxon>
        <taxon>Staphylococcaceae</taxon>
        <taxon>Staphylococcus</taxon>
    </lineage>
</organism>
<sequence>MKFTNLTAKEFGAFTDSMPYSHFTQTVGHYELKLAEGYETHLVGIKNNNNEVIAACLLTAVPVMKVFKYFYSNRGPVIDYENQELVHFFFNELSKYVKKHRCLYLHIDPYLPYQYLNHDGEITGNAGNDWFFDKMSNLGFEHTGFHKGFDPVLQIRYHSVLDLKDKTADDIIKNMDGLRKRNTKKVKKNGVKVRYLSEEELPIFRSFMEDTSESKAFADRDDKFYYNRLKYYKDRVLVPLAYINFDEYIKELNEERDILNKDLNKALKDIEKRPENKKAHNKRDNLQQQLDANEQKIEEGKRLQEEHGNELPISAGFFFINPFEVVYYAGGTSNAFRHFAGSYAVQWEMINYALNHGIDRYNFYGVSGKFTEDAEDAGVVKFKKGYNAEIIEYVGDFIKPINKPVYAAYTALKKVKDRIF</sequence>
<gene>
    <name type="primary">femA</name>
    <name type="ordered locus">SA1206</name>
</gene>
<dbReference type="EC" id="2.3.2.17"/>
<dbReference type="EMBL" id="BA000018">
    <property type="protein sequence ID" value="BAB42466.1"/>
    <property type="molecule type" value="Genomic_DNA"/>
</dbReference>
<dbReference type="PIR" id="F89913">
    <property type="entry name" value="F89913"/>
</dbReference>
<dbReference type="RefSeq" id="WP_000673315.1">
    <property type="nucleotide sequence ID" value="NC_002745.2"/>
</dbReference>
<dbReference type="SMR" id="Q7A5R3"/>
<dbReference type="EnsemblBacteria" id="BAB42466">
    <property type="protein sequence ID" value="BAB42466"/>
    <property type="gene ID" value="BAB42466"/>
</dbReference>
<dbReference type="KEGG" id="sau:SA1206"/>
<dbReference type="HOGENOM" id="CLU_048411_1_0_9"/>
<dbReference type="GO" id="GO:0005737">
    <property type="term" value="C:cytoplasm"/>
    <property type="evidence" value="ECO:0007669"/>
    <property type="project" value="UniProtKB-SubCell"/>
</dbReference>
<dbReference type="GO" id="GO:0016755">
    <property type="term" value="F:aminoacyltransferase activity"/>
    <property type="evidence" value="ECO:0007669"/>
    <property type="project" value="InterPro"/>
</dbReference>
<dbReference type="GO" id="GO:0000166">
    <property type="term" value="F:nucleotide binding"/>
    <property type="evidence" value="ECO:0007669"/>
    <property type="project" value="InterPro"/>
</dbReference>
<dbReference type="GO" id="GO:0071555">
    <property type="term" value="P:cell wall organization"/>
    <property type="evidence" value="ECO:0007669"/>
    <property type="project" value="UniProtKB-KW"/>
</dbReference>
<dbReference type="GO" id="GO:0009252">
    <property type="term" value="P:peptidoglycan biosynthetic process"/>
    <property type="evidence" value="ECO:0007669"/>
    <property type="project" value="UniProtKB-KW"/>
</dbReference>
<dbReference type="GO" id="GO:0008360">
    <property type="term" value="P:regulation of cell shape"/>
    <property type="evidence" value="ECO:0007669"/>
    <property type="project" value="UniProtKB-KW"/>
</dbReference>
<dbReference type="GO" id="GO:0046677">
    <property type="term" value="P:response to antibiotic"/>
    <property type="evidence" value="ECO:0007669"/>
    <property type="project" value="UniProtKB-KW"/>
</dbReference>
<dbReference type="Gene3D" id="1.20.58.90">
    <property type="match status" value="1"/>
</dbReference>
<dbReference type="Gene3D" id="3.40.630.30">
    <property type="match status" value="2"/>
</dbReference>
<dbReference type="InterPro" id="IPR016181">
    <property type="entry name" value="Acyl_CoA_acyltransferase"/>
</dbReference>
<dbReference type="InterPro" id="IPR003447">
    <property type="entry name" value="FEMABX"/>
</dbReference>
<dbReference type="InterPro" id="IPR050644">
    <property type="entry name" value="PG_Glycine_Bridge_Synth"/>
</dbReference>
<dbReference type="InterPro" id="IPR010978">
    <property type="entry name" value="tRNA-bd_arm"/>
</dbReference>
<dbReference type="PANTHER" id="PTHR36174:SF2">
    <property type="entry name" value="AMINOACYLTRANSFERASE FEMA"/>
    <property type="match status" value="1"/>
</dbReference>
<dbReference type="PANTHER" id="PTHR36174">
    <property type="entry name" value="LIPID II:GLYCINE GLYCYLTRANSFERASE"/>
    <property type="match status" value="1"/>
</dbReference>
<dbReference type="Pfam" id="PF02388">
    <property type="entry name" value="FemAB"/>
    <property type="match status" value="1"/>
</dbReference>
<dbReference type="SUPFAM" id="SSF55729">
    <property type="entry name" value="Acyl-CoA N-acyltransferases (Nat)"/>
    <property type="match status" value="2"/>
</dbReference>
<dbReference type="SUPFAM" id="SSF46589">
    <property type="entry name" value="tRNA-binding arm"/>
    <property type="match status" value="1"/>
</dbReference>
<dbReference type="PROSITE" id="PS51191">
    <property type="entry name" value="FEMABX"/>
    <property type="match status" value="1"/>
</dbReference>
<comment type="function">
    <text evidence="1">Catalyzes the formation of the pentaglycine interpeptide bridge, which is characteristic of the S.aureus peptidoglycan. Adds glycines 2 and 3 of the pentaglycine bridge, using glycyl-tRNA(Gly) as donor. Involved in resistance to methicillin (By similarity).</text>
</comment>
<comment type="catalytic activity">
    <reaction>
        <text>beta-D-GlcNAc-(1-&gt;4)-Mur2Ac(oyl-L-Ala-D-isoglutaminyl-L-Lys-(N(6)-Gly)-D-Ala-D-Ala)-di-trans,octa-cis-undecaprenyl diphosphate + 2 glycyl-tRNA(Gly) = MurNAc-L-Ala-D-isoglutaminyl-L-Lys-(N(6)-tri-Gly)-D-Ala-D-Ala-diphospho-di-trans,octa-cis-undecaprenyl-GlcNAc + 2 tRNA(Gly) + 2 H(+)</text>
        <dbReference type="Rhea" id="RHEA:30439"/>
        <dbReference type="Rhea" id="RHEA-COMP:9664"/>
        <dbReference type="Rhea" id="RHEA-COMP:9683"/>
        <dbReference type="ChEBI" id="CHEBI:15378"/>
        <dbReference type="ChEBI" id="CHEBI:62234"/>
        <dbReference type="ChEBI" id="CHEBI:62235"/>
        <dbReference type="ChEBI" id="CHEBI:78442"/>
        <dbReference type="ChEBI" id="CHEBI:78522"/>
        <dbReference type="EC" id="2.3.2.17"/>
    </reaction>
</comment>
<comment type="subunit">
    <text evidence="1">Homodimer. Interacts with FemB (By similarity).</text>
</comment>
<comment type="subcellular location">
    <subcellularLocation>
        <location evidence="1">Cytoplasm</location>
    </subcellularLocation>
</comment>
<comment type="similarity">
    <text evidence="2">Belongs to the FemABX family.</text>
</comment>